<dbReference type="EMBL" id="CP000521">
    <property type="protein sequence ID" value="ABO13387.2"/>
    <property type="molecule type" value="Genomic_DNA"/>
</dbReference>
<dbReference type="RefSeq" id="WP_000831329.1">
    <property type="nucleotide sequence ID" value="NZ_CP053098.1"/>
</dbReference>
<dbReference type="SMR" id="A3M8Z3"/>
<dbReference type="GeneID" id="97427695"/>
<dbReference type="KEGG" id="acb:A1S_2984"/>
<dbReference type="HOGENOM" id="CLU_129938_2_0_6"/>
<dbReference type="GO" id="GO:1990904">
    <property type="term" value="C:ribonucleoprotein complex"/>
    <property type="evidence" value="ECO:0007669"/>
    <property type="project" value="UniProtKB-KW"/>
</dbReference>
<dbReference type="GO" id="GO:0005840">
    <property type="term" value="C:ribosome"/>
    <property type="evidence" value="ECO:0007669"/>
    <property type="project" value="UniProtKB-KW"/>
</dbReference>
<dbReference type="GO" id="GO:0003735">
    <property type="term" value="F:structural constituent of ribosome"/>
    <property type="evidence" value="ECO:0007669"/>
    <property type="project" value="InterPro"/>
</dbReference>
<dbReference type="GO" id="GO:0006412">
    <property type="term" value="P:translation"/>
    <property type="evidence" value="ECO:0007669"/>
    <property type="project" value="UniProtKB-UniRule"/>
</dbReference>
<dbReference type="FunFam" id="1.10.287.3980:FF:000001">
    <property type="entry name" value="Mitochondrial ribosomal protein L34"/>
    <property type="match status" value="1"/>
</dbReference>
<dbReference type="Gene3D" id="1.10.287.3980">
    <property type="match status" value="1"/>
</dbReference>
<dbReference type="HAMAP" id="MF_00391">
    <property type="entry name" value="Ribosomal_bL34"/>
    <property type="match status" value="1"/>
</dbReference>
<dbReference type="InterPro" id="IPR000271">
    <property type="entry name" value="Ribosomal_bL34"/>
</dbReference>
<dbReference type="InterPro" id="IPR020939">
    <property type="entry name" value="Ribosomal_bL34_CS"/>
</dbReference>
<dbReference type="NCBIfam" id="TIGR01030">
    <property type="entry name" value="rpmH_bact"/>
    <property type="match status" value="1"/>
</dbReference>
<dbReference type="PANTHER" id="PTHR14503:SF4">
    <property type="entry name" value="LARGE RIBOSOMAL SUBUNIT PROTEIN BL34M"/>
    <property type="match status" value="1"/>
</dbReference>
<dbReference type="PANTHER" id="PTHR14503">
    <property type="entry name" value="MITOCHONDRIAL RIBOSOMAL PROTEIN 34 FAMILY MEMBER"/>
    <property type="match status" value="1"/>
</dbReference>
<dbReference type="Pfam" id="PF00468">
    <property type="entry name" value="Ribosomal_L34"/>
    <property type="match status" value="1"/>
</dbReference>
<dbReference type="PROSITE" id="PS00784">
    <property type="entry name" value="RIBOSOMAL_L34"/>
    <property type="match status" value="1"/>
</dbReference>
<organism>
    <name type="scientific">Acinetobacter baumannii (strain ATCC 17978 / DSM 105126 / CIP 53.77 / LMG 1025 / NCDC KC755 / 5377)</name>
    <dbReference type="NCBI Taxonomy" id="400667"/>
    <lineage>
        <taxon>Bacteria</taxon>
        <taxon>Pseudomonadati</taxon>
        <taxon>Pseudomonadota</taxon>
        <taxon>Gammaproteobacteria</taxon>
        <taxon>Moraxellales</taxon>
        <taxon>Moraxellaceae</taxon>
        <taxon>Acinetobacter</taxon>
        <taxon>Acinetobacter calcoaceticus/baumannii complex</taxon>
    </lineage>
</organism>
<sequence length="44" mass="5175">MKRTFQPSELKRKRVHGFRARMATKAGRQVLARRRAKGRHSLTV</sequence>
<keyword id="KW-0687">Ribonucleoprotein</keyword>
<keyword id="KW-0689">Ribosomal protein</keyword>
<gene>
    <name evidence="1" type="primary">rpmH</name>
    <name type="ordered locus">A1S_2984</name>
</gene>
<proteinExistence type="inferred from homology"/>
<accession>A3M8Z3</accession>
<protein>
    <recommendedName>
        <fullName evidence="1">Large ribosomal subunit protein bL34</fullName>
    </recommendedName>
    <alternativeName>
        <fullName evidence="3">50S ribosomal protein L34</fullName>
    </alternativeName>
</protein>
<comment type="similarity">
    <text evidence="1">Belongs to the bacterial ribosomal protein bL34 family.</text>
</comment>
<feature type="chain" id="PRO_1000122883" description="Large ribosomal subunit protein bL34">
    <location>
        <begin position="1"/>
        <end position="44"/>
    </location>
</feature>
<feature type="region of interest" description="Disordered" evidence="2">
    <location>
        <begin position="24"/>
        <end position="44"/>
    </location>
</feature>
<feature type="compositionally biased region" description="Basic residues" evidence="2">
    <location>
        <begin position="31"/>
        <end position="44"/>
    </location>
</feature>
<reference key="1">
    <citation type="journal article" date="2007" name="Genes Dev.">
        <title>New insights into Acinetobacter baumannii pathogenesis revealed by high-density pyrosequencing and transposon mutagenesis.</title>
        <authorList>
            <person name="Smith M.G."/>
            <person name="Gianoulis T.A."/>
            <person name="Pukatzki S."/>
            <person name="Mekalanos J.J."/>
            <person name="Ornston L.N."/>
            <person name="Gerstein M."/>
            <person name="Snyder M."/>
        </authorList>
    </citation>
    <scope>NUCLEOTIDE SEQUENCE [LARGE SCALE GENOMIC DNA]</scope>
    <source>
        <strain>ATCC 17978 / DSM 105126 / CIP 53.77 / LMG 1025 / NCDC KC755 / 5377</strain>
    </source>
</reference>
<name>RL34_ACIBT</name>
<evidence type="ECO:0000255" key="1">
    <source>
        <dbReference type="HAMAP-Rule" id="MF_00391"/>
    </source>
</evidence>
<evidence type="ECO:0000256" key="2">
    <source>
        <dbReference type="SAM" id="MobiDB-lite"/>
    </source>
</evidence>
<evidence type="ECO:0000305" key="3"/>